<sequence>MANYTAADVKRLRELTGAGMMACKKALEESGGDFDKAIEALRIKGAKDVGKRAERTAANGLIALAQDGDTSAVLLELNCETDFVAKNDKFQELAAELAGFVARTSPSDVPSLLSADYADGKTVSQVIEELSAVIGEKIELRRFAKVEGAYVASYMHKSDPDLPPTLGVLVELDKPNAEVAKDLAQQIAALAPKYISRDDVPADVVENERRIAKATAREEGKPEQALPKIVEGRLNGFFKDATLLGQPFVKDNKKTIQQVVDEAGVTVRRFVRFKVGQA</sequence>
<reference key="1">
    <citation type="journal article" date="2007" name="J. Bacteriol.">
        <title>Genome sequence and analysis of the soil cellulolytic actinomycete Thermobifida fusca YX.</title>
        <authorList>
            <person name="Lykidis A."/>
            <person name="Mavromatis K."/>
            <person name="Ivanova N."/>
            <person name="Anderson I."/>
            <person name="Land M."/>
            <person name="DiBartolo G."/>
            <person name="Martinez M."/>
            <person name="Lapidus A."/>
            <person name="Lucas S."/>
            <person name="Copeland A."/>
            <person name="Richardson P."/>
            <person name="Wilson D.B."/>
            <person name="Kyrpides N."/>
        </authorList>
    </citation>
    <scope>NUCLEOTIDE SEQUENCE [LARGE SCALE GENOMIC DNA]</scope>
    <source>
        <strain>YX</strain>
    </source>
</reference>
<organism>
    <name type="scientific">Thermobifida fusca (strain YX)</name>
    <dbReference type="NCBI Taxonomy" id="269800"/>
    <lineage>
        <taxon>Bacteria</taxon>
        <taxon>Bacillati</taxon>
        <taxon>Actinomycetota</taxon>
        <taxon>Actinomycetes</taxon>
        <taxon>Streptosporangiales</taxon>
        <taxon>Nocardiopsidaceae</taxon>
        <taxon>Thermobifida</taxon>
    </lineage>
</organism>
<name>EFTS_THEFY</name>
<accession>Q47S52</accession>
<evidence type="ECO:0000255" key="1">
    <source>
        <dbReference type="HAMAP-Rule" id="MF_00050"/>
    </source>
</evidence>
<keyword id="KW-0963">Cytoplasm</keyword>
<keyword id="KW-0251">Elongation factor</keyword>
<keyword id="KW-0648">Protein biosynthesis</keyword>
<gene>
    <name evidence="1" type="primary">tsf</name>
    <name type="ordered locus">Tfu_0677</name>
</gene>
<comment type="function">
    <text evidence="1">Associates with the EF-Tu.GDP complex and induces the exchange of GDP to GTP. It remains bound to the aminoacyl-tRNA.EF-Tu.GTP complex up to the GTP hydrolysis stage on the ribosome.</text>
</comment>
<comment type="subcellular location">
    <subcellularLocation>
        <location evidence="1">Cytoplasm</location>
    </subcellularLocation>
</comment>
<comment type="similarity">
    <text evidence="1">Belongs to the EF-Ts family.</text>
</comment>
<feature type="chain" id="PRO_0000241545" description="Elongation factor Ts">
    <location>
        <begin position="1"/>
        <end position="278"/>
    </location>
</feature>
<feature type="region of interest" description="Involved in Mg(2+) ion dislocation from EF-Tu" evidence="1">
    <location>
        <begin position="81"/>
        <end position="84"/>
    </location>
</feature>
<dbReference type="EMBL" id="CP000088">
    <property type="protein sequence ID" value="AAZ54715.1"/>
    <property type="molecule type" value="Genomic_DNA"/>
</dbReference>
<dbReference type="RefSeq" id="WP_011291124.1">
    <property type="nucleotide sequence ID" value="NC_007333.1"/>
</dbReference>
<dbReference type="SMR" id="Q47S52"/>
<dbReference type="STRING" id="269800.Tfu_0677"/>
<dbReference type="KEGG" id="tfu:Tfu_0677"/>
<dbReference type="eggNOG" id="COG0264">
    <property type="taxonomic scope" value="Bacteria"/>
</dbReference>
<dbReference type="HOGENOM" id="CLU_047155_0_0_11"/>
<dbReference type="OrthoDB" id="9808348at2"/>
<dbReference type="GO" id="GO:0005737">
    <property type="term" value="C:cytoplasm"/>
    <property type="evidence" value="ECO:0007669"/>
    <property type="project" value="UniProtKB-SubCell"/>
</dbReference>
<dbReference type="GO" id="GO:0003746">
    <property type="term" value="F:translation elongation factor activity"/>
    <property type="evidence" value="ECO:0007669"/>
    <property type="project" value="UniProtKB-UniRule"/>
</dbReference>
<dbReference type="CDD" id="cd14275">
    <property type="entry name" value="UBA_EF-Ts"/>
    <property type="match status" value="1"/>
</dbReference>
<dbReference type="FunFam" id="1.10.286.20:FF:000001">
    <property type="entry name" value="Elongation factor Ts"/>
    <property type="match status" value="1"/>
</dbReference>
<dbReference type="FunFam" id="1.10.8.10:FF:000001">
    <property type="entry name" value="Elongation factor Ts"/>
    <property type="match status" value="1"/>
</dbReference>
<dbReference type="Gene3D" id="1.10.286.20">
    <property type="match status" value="1"/>
</dbReference>
<dbReference type="Gene3D" id="1.10.8.10">
    <property type="entry name" value="DNA helicase RuvA subunit, C-terminal domain"/>
    <property type="match status" value="1"/>
</dbReference>
<dbReference type="Gene3D" id="3.30.479.20">
    <property type="entry name" value="Elongation factor Ts, dimerisation domain"/>
    <property type="match status" value="2"/>
</dbReference>
<dbReference type="HAMAP" id="MF_00050">
    <property type="entry name" value="EF_Ts"/>
    <property type="match status" value="1"/>
</dbReference>
<dbReference type="InterPro" id="IPR036402">
    <property type="entry name" value="EF-Ts_dimer_sf"/>
</dbReference>
<dbReference type="InterPro" id="IPR001816">
    <property type="entry name" value="Transl_elong_EFTs/EF1B"/>
</dbReference>
<dbReference type="InterPro" id="IPR014039">
    <property type="entry name" value="Transl_elong_EFTs/EF1B_dimer"/>
</dbReference>
<dbReference type="InterPro" id="IPR018101">
    <property type="entry name" value="Transl_elong_Ts_CS"/>
</dbReference>
<dbReference type="InterPro" id="IPR009060">
    <property type="entry name" value="UBA-like_sf"/>
</dbReference>
<dbReference type="NCBIfam" id="TIGR00116">
    <property type="entry name" value="tsf"/>
    <property type="match status" value="1"/>
</dbReference>
<dbReference type="PANTHER" id="PTHR11741">
    <property type="entry name" value="ELONGATION FACTOR TS"/>
    <property type="match status" value="1"/>
</dbReference>
<dbReference type="PANTHER" id="PTHR11741:SF0">
    <property type="entry name" value="ELONGATION FACTOR TS, MITOCHONDRIAL"/>
    <property type="match status" value="1"/>
</dbReference>
<dbReference type="Pfam" id="PF00889">
    <property type="entry name" value="EF_TS"/>
    <property type="match status" value="1"/>
</dbReference>
<dbReference type="SUPFAM" id="SSF54713">
    <property type="entry name" value="Elongation factor Ts (EF-Ts), dimerisation domain"/>
    <property type="match status" value="2"/>
</dbReference>
<dbReference type="SUPFAM" id="SSF46934">
    <property type="entry name" value="UBA-like"/>
    <property type="match status" value="1"/>
</dbReference>
<dbReference type="PROSITE" id="PS01126">
    <property type="entry name" value="EF_TS_1"/>
    <property type="match status" value="1"/>
</dbReference>
<dbReference type="PROSITE" id="PS01127">
    <property type="entry name" value="EF_TS_2"/>
    <property type="match status" value="1"/>
</dbReference>
<protein>
    <recommendedName>
        <fullName evidence="1">Elongation factor Ts</fullName>
        <shortName evidence="1">EF-Ts</shortName>
    </recommendedName>
</protein>
<proteinExistence type="inferred from homology"/>